<keyword id="KW-0614">Plasmid</keyword>
<sequence>MSTILVLGGSNGRTLEKLAKKRDCQVIFHDGKNHGGVKKTFRSVIKKCDVIVIQKGACGHVSIDVAKEYAKKYDVPLLFNQGFGGTGALEMGLKHLKAA</sequence>
<protein>
    <recommendedName>
        <fullName>UPF0751 protein BAMEG_A0107</fullName>
    </recommendedName>
</protein>
<organism>
    <name type="scientific">Bacillus anthracis (strain CDC 684 / NRRL 3495)</name>
    <dbReference type="NCBI Taxonomy" id="568206"/>
    <lineage>
        <taxon>Bacteria</taxon>
        <taxon>Bacillati</taxon>
        <taxon>Bacillota</taxon>
        <taxon>Bacilli</taxon>
        <taxon>Bacillales</taxon>
        <taxon>Bacillaceae</taxon>
        <taxon>Bacillus</taxon>
        <taxon>Bacillus cereus group</taxon>
    </lineage>
</organism>
<dbReference type="EMBL" id="CP001216">
    <property type="protein sequence ID" value="ACP17709.1"/>
    <property type="status" value="ALT_INIT"/>
    <property type="molecule type" value="Genomic_DNA"/>
</dbReference>
<dbReference type="KEGG" id="bah:BAMEG_A0107"/>
<dbReference type="HOGENOM" id="CLU_163819_0_0_9"/>
<dbReference type="InterPro" id="IPR016772">
    <property type="entry name" value="UCP020408"/>
</dbReference>
<dbReference type="Pfam" id="PF10087">
    <property type="entry name" value="DUF2325"/>
    <property type="match status" value="1"/>
</dbReference>
<feature type="chain" id="PRO_0000383577" description="UPF0751 protein BAMEG_A0107">
    <location>
        <begin position="1"/>
        <end position="99"/>
    </location>
</feature>
<accession>C3LL81</accession>
<name>Y5907_BACAC</name>
<geneLocation type="plasmid">
    <name>pX01</name>
</geneLocation>
<comment type="similarity">
    <text evidence="1">Belongs to the UPF0751 family.</text>
</comment>
<comment type="sequence caution" evidence="1">
    <conflict type="erroneous initiation">
        <sequence resource="EMBL-CDS" id="ACP17709"/>
    </conflict>
</comment>
<gene>
    <name type="ordered locus">BAMEG_A0107</name>
</gene>
<evidence type="ECO:0000305" key="1"/>
<proteinExistence type="inferred from homology"/>
<reference key="1">
    <citation type="submission" date="2008-10" db="EMBL/GenBank/DDBJ databases">
        <title>Genome sequence of Bacillus anthracis str. CDC 684.</title>
        <authorList>
            <person name="Dodson R.J."/>
            <person name="Munk A.C."/>
            <person name="Brettin T."/>
            <person name="Bruce D."/>
            <person name="Detter C."/>
            <person name="Tapia R."/>
            <person name="Han C."/>
            <person name="Sutton G."/>
            <person name="Sims D."/>
        </authorList>
    </citation>
    <scope>NUCLEOTIDE SEQUENCE [LARGE SCALE GENOMIC DNA]</scope>
    <source>
        <strain>CDC 684 / NRRL 3495</strain>
    </source>
</reference>